<feature type="chain" id="PRO_0000149016" description="Ribosome biogenesis protein Nop10">
    <location>
        <begin position="1"/>
        <end position="60"/>
    </location>
</feature>
<feature type="region of interest" description="Disordered" evidence="2">
    <location>
        <begin position="37"/>
        <end position="60"/>
    </location>
</feature>
<feature type="compositionally biased region" description="Basic residues" evidence="2">
    <location>
        <begin position="49"/>
        <end position="60"/>
    </location>
</feature>
<name>NOP10_HALSA</name>
<evidence type="ECO:0000250" key="1"/>
<evidence type="ECO:0000256" key="2">
    <source>
        <dbReference type="SAM" id="MobiDB-lite"/>
    </source>
</evidence>
<evidence type="ECO:0000305" key="3"/>
<accession>Q9HRT9</accession>
<protein>
    <recommendedName>
        <fullName>Ribosome biogenesis protein Nop10</fullName>
    </recommendedName>
</protein>
<dbReference type="EMBL" id="AE004437">
    <property type="protein sequence ID" value="AAG19069.1"/>
    <property type="molecule type" value="Genomic_DNA"/>
</dbReference>
<dbReference type="PIR" id="A84213">
    <property type="entry name" value="A84213"/>
</dbReference>
<dbReference type="RefSeq" id="WP_010902365.1">
    <property type="nucleotide sequence ID" value="NC_002607.1"/>
</dbReference>
<dbReference type="SMR" id="Q9HRT9"/>
<dbReference type="STRING" id="64091.VNG_0548C"/>
<dbReference type="PaxDb" id="64091-VNG_0548C"/>
<dbReference type="KEGG" id="hal:VNG_0548C"/>
<dbReference type="PATRIC" id="fig|64091.14.peg.417"/>
<dbReference type="HOGENOM" id="CLU_196480_1_0_2"/>
<dbReference type="InParanoid" id="Q9HRT9"/>
<dbReference type="OrthoDB" id="7259at2157"/>
<dbReference type="PhylomeDB" id="Q9HRT9"/>
<dbReference type="Proteomes" id="UP000000554">
    <property type="component" value="Chromosome"/>
</dbReference>
<dbReference type="GO" id="GO:1990904">
    <property type="term" value="C:ribonucleoprotein complex"/>
    <property type="evidence" value="ECO:0007669"/>
    <property type="project" value="UniProtKB-KW"/>
</dbReference>
<dbReference type="GO" id="GO:0030515">
    <property type="term" value="F:snoRNA binding"/>
    <property type="evidence" value="ECO:0007669"/>
    <property type="project" value="InterPro"/>
</dbReference>
<dbReference type="GO" id="GO:0001522">
    <property type="term" value="P:pseudouridine synthesis"/>
    <property type="evidence" value="ECO:0007669"/>
    <property type="project" value="InterPro"/>
</dbReference>
<dbReference type="GO" id="GO:0006364">
    <property type="term" value="P:rRNA processing"/>
    <property type="evidence" value="ECO:0007669"/>
    <property type="project" value="UniProtKB-UniRule"/>
</dbReference>
<dbReference type="Gene3D" id="2.20.28.40">
    <property type="entry name" value="H/ACA ribonucleoprotein complex, subunit Nop10"/>
    <property type="match status" value="1"/>
</dbReference>
<dbReference type="HAMAP" id="MF_00803">
    <property type="entry name" value="Nop10"/>
    <property type="match status" value="1"/>
</dbReference>
<dbReference type="InterPro" id="IPR007264">
    <property type="entry name" value="H/ACA_rnp_Nop10"/>
</dbReference>
<dbReference type="InterPro" id="IPR036756">
    <property type="entry name" value="H/ACA_rnp_Nop10_sf"/>
</dbReference>
<dbReference type="InterPro" id="IPR023532">
    <property type="entry name" value="Nop10_arc-typ"/>
</dbReference>
<dbReference type="NCBIfam" id="NF009623">
    <property type="entry name" value="PRK13130.1"/>
    <property type="match status" value="1"/>
</dbReference>
<dbReference type="Pfam" id="PF04135">
    <property type="entry name" value="Nop10p"/>
    <property type="match status" value="1"/>
</dbReference>
<dbReference type="SUPFAM" id="SSF144210">
    <property type="entry name" value="Nop10-like SnoRNP"/>
    <property type="match status" value="1"/>
</dbReference>
<reference key="1">
    <citation type="journal article" date="2000" name="Proc. Natl. Acad. Sci. U.S.A.">
        <title>Genome sequence of Halobacterium species NRC-1.</title>
        <authorList>
            <person name="Ng W.V."/>
            <person name="Kennedy S.P."/>
            <person name="Mahairas G.G."/>
            <person name="Berquist B."/>
            <person name="Pan M."/>
            <person name="Shukla H.D."/>
            <person name="Lasky S.R."/>
            <person name="Baliga N.S."/>
            <person name="Thorsson V."/>
            <person name="Sbrogna J."/>
            <person name="Swartzell S."/>
            <person name="Weir D."/>
            <person name="Hall J."/>
            <person name="Dahl T.A."/>
            <person name="Welti R."/>
            <person name="Goo Y.A."/>
            <person name="Leithauser B."/>
            <person name="Keller K."/>
            <person name="Cruz R."/>
            <person name="Danson M.J."/>
            <person name="Hough D.W."/>
            <person name="Maddocks D.G."/>
            <person name="Jablonski P.E."/>
            <person name="Krebs M.P."/>
            <person name="Angevine C.M."/>
            <person name="Dale H."/>
            <person name="Isenbarger T.A."/>
            <person name="Peck R.F."/>
            <person name="Pohlschroder M."/>
            <person name="Spudich J.L."/>
            <person name="Jung K.-H."/>
            <person name="Alam M."/>
            <person name="Freitas T."/>
            <person name="Hou S."/>
            <person name="Daniels C.J."/>
            <person name="Dennis P.P."/>
            <person name="Omer A.D."/>
            <person name="Ebhardt H."/>
            <person name="Lowe T.M."/>
            <person name="Liang P."/>
            <person name="Riley M."/>
            <person name="Hood L."/>
            <person name="DasSarma S."/>
        </authorList>
    </citation>
    <scope>NUCLEOTIDE SEQUENCE [LARGE SCALE GENOMIC DNA]</scope>
    <source>
        <strain>ATCC 700922 / JCM 11081 / NRC-1</strain>
    </source>
</reference>
<proteinExistence type="inferred from homology"/>
<organism>
    <name type="scientific">Halobacterium salinarum (strain ATCC 700922 / JCM 11081 / NRC-1)</name>
    <name type="common">Halobacterium halobium</name>
    <dbReference type="NCBI Taxonomy" id="64091"/>
    <lineage>
        <taxon>Archaea</taxon>
        <taxon>Methanobacteriati</taxon>
        <taxon>Methanobacteriota</taxon>
        <taxon>Stenosarchaea group</taxon>
        <taxon>Halobacteria</taxon>
        <taxon>Halobacteriales</taxon>
        <taxon>Halobacteriaceae</taxon>
        <taxon>Halobacterium</taxon>
        <taxon>Halobacterium salinarum NRC-34001</taxon>
    </lineage>
</organism>
<comment type="function">
    <text evidence="1">Involved in ribosome biogenesis; more specifically in 18S rRNA pseudouridylation and in cleavage of pre-rRNA.</text>
</comment>
<comment type="similarity">
    <text evidence="3">Belongs to the NOP10 family.</text>
</comment>
<gene>
    <name type="primary">nop10</name>
    <name type="ordered locus">VNG_0548C</name>
</gene>
<keyword id="KW-1185">Reference proteome</keyword>
<keyword id="KW-0687">Ribonucleoprotein</keyword>
<keyword id="KW-0690">Ribosome biogenesis</keyword>
<keyword id="KW-0698">rRNA processing</keyword>
<sequence length="60" mass="6752">MKSDIRVCEAWRSHHDGPVYTLSETCPECGGDAVNSAPAPFDPADPHGKYRRALKERRRL</sequence>